<dbReference type="EMBL" id="AP009240">
    <property type="protein sequence ID" value="BAG79111.1"/>
    <property type="molecule type" value="Genomic_DNA"/>
</dbReference>
<dbReference type="RefSeq" id="WP_000644741.1">
    <property type="nucleotide sequence ID" value="NC_011415.1"/>
</dbReference>
<dbReference type="SMR" id="B6I226"/>
<dbReference type="GeneID" id="93778675"/>
<dbReference type="KEGG" id="ecy:ECSE_3587"/>
<dbReference type="HOGENOM" id="CLU_158491_1_2_6"/>
<dbReference type="Proteomes" id="UP000008199">
    <property type="component" value="Chromosome"/>
</dbReference>
<dbReference type="GO" id="GO:0022625">
    <property type="term" value="C:cytosolic large ribosomal subunit"/>
    <property type="evidence" value="ECO:0007669"/>
    <property type="project" value="TreeGrafter"/>
</dbReference>
<dbReference type="GO" id="GO:0003735">
    <property type="term" value="F:structural constituent of ribosome"/>
    <property type="evidence" value="ECO:0007669"/>
    <property type="project" value="InterPro"/>
</dbReference>
<dbReference type="GO" id="GO:0006412">
    <property type="term" value="P:translation"/>
    <property type="evidence" value="ECO:0007669"/>
    <property type="project" value="UniProtKB-UniRule"/>
</dbReference>
<dbReference type="CDD" id="cd00427">
    <property type="entry name" value="Ribosomal_L29_HIP"/>
    <property type="match status" value="1"/>
</dbReference>
<dbReference type="Gene3D" id="6.10.140.1970">
    <property type="match status" value="1"/>
</dbReference>
<dbReference type="HAMAP" id="MF_00374">
    <property type="entry name" value="Ribosomal_uL29"/>
    <property type="match status" value="1"/>
</dbReference>
<dbReference type="InterPro" id="IPR050063">
    <property type="entry name" value="Ribosomal_protein_uL29"/>
</dbReference>
<dbReference type="InterPro" id="IPR001854">
    <property type="entry name" value="Ribosomal_uL29"/>
</dbReference>
<dbReference type="InterPro" id="IPR018254">
    <property type="entry name" value="Ribosomal_uL29_CS"/>
</dbReference>
<dbReference type="InterPro" id="IPR036049">
    <property type="entry name" value="Ribosomal_uL29_sf"/>
</dbReference>
<dbReference type="NCBIfam" id="TIGR00012">
    <property type="entry name" value="L29"/>
    <property type="match status" value="1"/>
</dbReference>
<dbReference type="PANTHER" id="PTHR10916">
    <property type="entry name" value="60S RIBOSOMAL PROTEIN L35/50S RIBOSOMAL PROTEIN L29"/>
    <property type="match status" value="1"/>
</dbReference>
<dbReference type="PANTHER" id="PTHR10916:SF0">
    <property type="entry name" value="LARGE RIBOSOMAL SUBUNIT PROTEIN UL29C"/>
    <property type="match status" value="1"/>
</dbReference>
<dbReference type="Pfam" id="PF00831">
    <property type="entry name" value="Ribosomal_L29"/>
    <property type="match status" value="1"/>
</dbReference>
<dbReference type="SUPFAM" id="SSF46561">
    <property type="entry name" value="Ribosomal protein L29 (L29p)"/>
    <property type="match status" value="1"/>
</dbReference>
<dbReference type="PROSITE" id="PS00579">
    <property type="entry name" value="RIBOSOMAL_L29"/>
    <property type="match status" value="1"/>
</dbReference>
<gene>
    <name evidence="1" type="primary">rpmC</name>
    <name type="ordered locus">ECSE_3587</name>
</gene>
<keyword id="KW-0687">Ribonucleoprotein</keyword>
<keyword id="KW-0689">Ribosomal protein</keyword>
<evidence type="ECO:0000255" key="1">
    <source>
        <dbReference type="HAMAP-Rule" id="MF_00374"/>
    </source>
</evidence>
<evidence type="ECO:0000305" key="2"/>
<accession>B6I226</accession>
<name>RL29_ECOSE</name>
<protein>
    <recommendedName>
        <fullName evidence="1">Large ribosomal subunit protein uL29</fullName>
    </recommendedName>
    <alternativeName>
        <fullName evidence="2">50S ribosomal protein L29</fullName>
    </alternativeName>
</protein>
<organism>
    <name type="scientific">Escherichia coli (strain SE11)</name>
    <dbReference type="NCBI Taxonomy" id="409438"/>
    <lineage>
        <taxon>Bacteria</taxon>
        <taxon>Pseudomonadati</taxon>
        <taxon>Pseudomonadota</taxon>
        <taxon>Gammaproteobacteria</taxon>
        <taxon>Enterobacterales</taxon>
        <taxon>Enterobacteriaceae</taxon>
        <taxon>Escherichia</taxon>
    </lineage>
</organism>
<feature type="chain" id="PRO_1000121770" description="Large ribosomal subunit protein uL29">
    <location>
        <begin position="1"/>
        <end position="63"/>
    </location>
</feature>
<proteinExistence type="inferred from homology"/>
<comment type="similarity">
    <text evidence="1">Belongs to the universal ribosomal protein uL29 family.</text>
</comment>
<reference key="1">
    <citation type="journal article" date="2008" name="DNA Res.">
        <title>Complete genome sequence and comparative analysis of the wild-type commensal Escherichia coli strain SE11 isolated from a healthy adult.</title>
        <authorList>
            <person name="Oshima K."/>
            <person name="Toh H."/>
            <person name="Ogura Y."/>
            <person name="Sasamoto H."/>
            <person name="Morita H."/>
            <person name="Park S.-H."/>
            <person name="Ooka T."/>
            <person name="Iyoda S."/>
            <person name="Taylor T.D."/>
            <person name="Hayashi T."/>
            <person name="Itoh K."/>
            <person name="Hattori M."/>
        </authorList>
    </citation>
    <scope>NUCLEOTIDE SEQUENCE [LARGE SCALE GENOMIC DNA]</scope>
    <source>
        <strain>SE11</strain>
    </source>
</reference>
<sequence>MKAKELREKSVEELNTELLNLLREQFNLRMQAASGQLQQSHLLKQVRRDVARVKTLLNEKAGA</sequence>